<proteinExistence type="inferred from homology"/>
<evidence type="ECO:0000255" key="1">
    <source>
        <dbReference type="HAMAP-Rule" id="MF_01350"/>
    </source>
</evidence>
<geneLocation type="chloroplast"/>
<comment type="function">
    <text evidence="1">NDH shuttles electrons from NAD(P)H:plastoquinone, via FMN and iron-sulfur (Fe-S) centers, to quinones in the photosynthetic chain and possibly in a chloroplast respiratory chain. The immediate electron acceptor for the enzyme in this species is believed to be plastoquinone. Couples the redox reaction to proton translocation, and thus conserves the redox energy in a proton gradient.</text>
</comment>
<comment type="catalytic activity">
    <reaction evidence="1">
        <text>a plastoquinone + NADH + (n+1) H(+)(in) = a plastoquinol + NAD(+) + n H(+)(out)</text>
        <dbReference type="Rhea" id="RHEA:42608"/>
        <dbReference type="Rhea" id="RHEA-COMP:9561"/>
        <dbReference type="Rhea" id="RHEA-COMP:9562"/>
        <dbReference type="ChEBI" id="CHEBI:15378"/>
        <dbReference type="ChEBI" id="CHEBI:17757"/>
        <dbReference type="ChEBI" id="CHEBI:57540"/>
        <dbReference type="ChEBI" id="CHEBI:57945"/>
        <dbReference type="ChEBI" id="CHEBI:62192"/>
    </reaction>
</comment>
<comment type="catalytic activity">
    <reaction evidence="1">
        <text>a plastoquinone + NADPH + (n+1) H(+)(in) = a plastoquinol + NADP(+) + n H(+)(out)</text>
        <dbReference type="Rhea" id="RHEA:42612"/>
        <dbReference type="Rhea" id="RHEA-COMP:9561"/>
        <dbReference type="Rhea" id="RHEA-COMP:9562"/>
        <dbReference type="ChEBI" id="CHEBI:15378"/>
        <dbReference type="ChEBI" id="CHEBI:17757"/>
        <dbReference type="ChEBI" id="CHEBI:57783"/>
        <dbReference type="ChEBI" id="CHEBI:58349"/>
        <dbReference type="ChEBI" id="CHEBI:62192"/>
    </reaction>
</comment>
<comment type="subunit">
    <text evidence="1">NDH is composed of at least 16 different subunits, 5 of which are encoded in the nucleus.</text>
</comment>
<comment type="subcellular location">
    <subcellularLocation>
        <location evidence="1">Plastid</location>
        <location evidence="1">Chloroplast thylakoid membrane</location>
        <topology evidence="1">Multi-pass membrane protein</topology>
    </subcellularLocation>
</comment>
<comment type="similarity">
    <text evidence="1">Belongs to the complex I subunit 1 family.</text>
</comment>
<name>NU1C_POPTR</name>
<gene>
    <name evidence="1" type="primary">ndhA</name>
    <name type="ordered locus">Poptr_cp084</name>
</gene>
<sequence>MIIDTTTVQAINSFSRLKSLNEVYGIIWMLVPILTLVLGITIGILVIVWLEREISAGIQQRIGPEYAGPFGVLQALADGTKLLFKENLFPSRGDTRLFSIGPSIAVISTLLSYSVIPFGYHFVLADLNIGVFLWIAISSIAPIGLLMSGYGSNNKYSFLGGLRAAAQSISYEIPLTLCVLSISLLSNSSSTVDIVEAQSKYGLGGWNLWRQPIGFIIFFISSLAECERLPFDLPEAEEELVAGYQTEYSGIKFGLFYVASYLNLLVSSLFVAVLYLGGWNISIPYISVPEFFDFEINKVGRVFGTTMGILITLVKTYLFLFIPITTRWTLPRLRMDQLLNLGWKFLLPISLGNLLLTTSSQLFSL</sequence>
<reference key="1">
    <citation type="journal article" date="2006" name="Science">
        <title>The genome of black cottonwood, Populus trichocarpa (Torr. &amp; Gray).</title>
        <authorList>
            <person name="Tuskan G.A."/>
            <person name="Difazio S."/>
            <person name="Jansson S."/>
            <person name="Bohlmann J."/>
            <person name="Grigoriev I."/>
            <person name="Hellsten U."/>
            <person name="Putnam N."/>
            <person name="Ralph S."/>
            <person name="Rombauts S."/>
            <person name="Salamov A."/>
            <person name="Schein J."/>
            <person name="Sterck L."/>
            <person name="Aerts A."/>
            <person name="Bhalerao R.R."/>
            <person name="Bhalerao R.P."/>
            <person name="Blaudez D."/>
            <person name="Boerjan W."/>
            <person name="Brun A."/>
            <person name="Brunner A."/>
            <person name="Busov V."/>
            <person name="Campbell M."/>
            <person name="Carlson J."/>
            <person name="Chalot M."/>
            <person name="Chapman J."/>
            <person name="Chen G.-L."/>
            <person name="Cooper D."/>
            <person name="Coutinho P.M."/>
            <person name="Couturier J."/>
            <person name="Covert S."/>
            <person name="Cronk Q."/>
            <person name="Cunningham R."/>
            <person name="Davis J."/>
            <person name="Degroeve S."/>
            <person name="Dejardin A."/>
            <person name="dePamphilis C.W."/>
            <person name="Detter J."/>
            <person name="Dirks B."/>
            <person name="Dubchak I."/>
            <person name="Duplessis S."/>
            <person name="Ehlting J."/>
            <person name="Ellis B."/>
            <person name="Gendler K."/>
            <person name="Goodstein D."/>
            <person name="Gribskov M."/>
            <person name="Grimwood J."/>
            <person name="Groover A."/>
            <person name="Gunter L."/>
            <person name="Hamberger B."/>
            <person name="Heinze B."/>
            <person name="Helariutta Y."/>
            <person name="Henrissat B."/>
            <person name="Holligan D."/>
            <person name="Holt R."/>
            <person name="Huang W."/>
            <person name="Islam-Faridi N."/>
            <person name="Jones S."/>
            <person name="Jones-Rhoades M."/>
            <person name="Jorgensen R."/>
            <person name="Joshi C."/>
            <person name="Kangasjaervi J."/>
            <person name="Karlsson J."/>
            <person name="Kelleher C."/>
            <person name="Kirkpatrick R."/>
            <person name="Kirst M."/>
            <person name="Kohler A."/>
            <person name="Kalluri U."/>
            <person name="Larimer F."/>
            <person name="Leebens-Mack J."/>
            <person name="Leple J.-C."/>
            <person name="Locascio P."/>
            <person name="Lou Y."/>
            <person name="Lucas S."/>
            <person name="Martin F."/>
            <person name="Montanini B."/>
            <person name="Napoli C."/>
            <person name="Nelson D.R."/>
            <person name="Nelson C."/>
            <person name="Nieminen K."/>
            <person name="Nilsson O."/>
            <person name="Pereda V."/>
            <person name="Peter G."/>
            <person name="Philippe R."/>
            <person name="Pilate G."/>
            <person name="Poliakov A."/>
            <person name="Razumovskaya J."/>
            <person name="Richardson P."/>
            <person name="Rinaldi C."/>
            <person name="Ritland K."/>
            <person name="Rouze P."/>
            <person name="Ryaboy D."/>
            <person name="Schmutz J."/>
            <person name="Schrader J."/>
            <person name="Segerman B."/>
            <person name="Shin H."/>
            <person name="Siddiqui A."/>
            <person name="Sterky F."/>
            <person name="Terry A."/>
            <person name="Tsai C.-J."/>
            <person name="Uberbacher E."/>
            <person name="Unneberg P."/>
            <person name="Vahala J."/>
            <person name="Wall K."/>
            <person name="Wessler S."/>
            <person name="Yang G."/>
            <person name="Yin T."/>
            <person name="Douglas C."/>
            <person name="Marra M."/>
            <person name="Sandberg G."/>
            <person name="Van de Peer Y."/>
            <person name="Rokhsar D.S."/>
        </authorList>
    </citation>
    <scope>NUCLEOTIDE SEQUENCE [LARGE SCALE GENOMIC DNA]</scope>
    <source>
        <strain>cv. Nisqually</strain>
    </source>
</reference>
<dbReference type="EC" id="7.1.1.-" evidence="1"/>
<dbReference type="EMBL" id="EF489041">
    <property type="protein sequence ID" value="ABO36766.1"/>
    <property type="molecule type" value="Genomic_DNA"/>
</dbReference>
<dbReference type="RefSeq" id="YP_001109562.1">
    <property type="nucleotide sequence ID" value="NC_009143.1"/>
</dbReference>
<dbReference type="SMR" id="A4GYX1"/>
<dbReference type="FunCoup" id="A4GYX1">
    <property type="interactions" value="30"/>
</dbReference>
<dbReference type="STRING" id="3694.A4GYX1"/>
<dbReference type="GeneID" id="4929745"/>
<dbReference type="KEGG" id="pop:4929745"/>
<dbReference type="eggNOG" id="KOG4770">
    <property type="taxonomic scope" value="Eukaryota"/>
</dbReference>
<dbReference type="InParanoid" id="A4GYX1"/>
<dbReference type="OrthoDB" id="531329at2759"/>
<dbReference type="Proteomes" id="UP000006729">
    <property type="component" value="Chloroplast"/>
</dbReference>
<dbReference type="ExpressionAtlas" id="A4GYX1">
    <property type="expression patterns" value="differential"/>
</dbReference>
<dbReference type="GO" id="GO:0009535">
    <property type="term" value="C:chloroplast thylakoid membrane"/>
    <property type="evidence" value="ECO:0007669"/>
    <property type="project" value="UniProtKB-SubCell"/>
</dbReference>
<dbReference type="GO" id="GO:0016655">
    <property type="term" value="F:oxidoreductase activity, acting on NAD(P)H, quinone or similar compound as acceptor"/>
    <property type="evidence" value="ECO:0007669"/>
    <property type="project" value="UniProtKB-UniRule"/>
</dbReference>
<dbReference type="GO" id="GO:0048038">
    <property type="term" value="F:quinone binding"/>
    <property type="evidence" value="ECO:0007669"/>
    <property type="project" value="UniProtKB-KW"/>
</dbReference>
<dbReference type="GO" id="GO:0009060">
    <property type="term" value="P:aerobic respiration"/>
    <property type="evidence" value="ECO:0000318"/>
    <property type="project" value="GO_Central"/>
</dbReference>
<dbReference type="GO" id="GO:0019684">
    <property type="term" value="P:photosynthesis, light reaction"/>
    <property type="evidence" value="ECO:0007669"/>
    <property type="project" value="UniProtKB-UniRule"/>
</dbReference>
<dbReference type="HAMAP" id="MF_01350">
    <property type="entry name" value="NDH1_NuoH"/>
    <property type="match status" value="1"/>
</dbReference>
<dbReference type="InterPro" id="IPR001694">
    <property type="entry name" value="NADH_UbQ_OxRdtase_su1/FPO"/>
</dbReference>
<dbReference type="InterPro" id="IPR018086">
    <property type="entry name" value="NADH_UbQ_OxRdtase_su1_CS"/>
</dbReference>
<dbReference type="NCBIfam" id="NF004741">
    <property type="entry name" value="PRK06076.1-2"/>
    <property type="match status" value="1"/>
</dbReference>
<dbReference type="PANTHER" id="PTHR11432">
    <property type="entry name" value="NADH DEHYDROGENASE SUBUNIT 1"/>
    <property type="match status" value="1"/>
</dbReference>
<dbReference type="PANTHER" id="PTHR11432:SF3">
    <property type="entry name" value="NADH-UBIQUINONE OXIDOREDUCTASE CHAIN 1"/>
    <property type="match status" value="1"/>
</dbReference>
<dbReference type="Pfam" id="PF00146">
    <property type="entry name" value="NADHdh"/>
    <property type="match status" value="1"/>
</dbReference>
<dbReference type="PROSITE" id="PS00667">
    <property type="entry name" value="COMPLEX1_ND1_1"/>
    <property type="match status" value="1"/>
</dbReference>
<dbReference type="PROSITE" id="PS00668">
    <property type="entry name" value="COMPLEX1_ND1_2"/>
    <property type="match status" value="1"/>
</dbReference>
<accession>A4GYX1</accession>
<organism>
    <name type="scientific">Populus trichocarpa</name>
    <name type="common">Western balsam poplar</name>
    <name type="synonym">Populus balsamifera subsp. trichocarpa</name>
    <dbReference type="NCBI Taxonomy" id="3694"/>
    <lineage>
        <taxon>Eukaryota</taxon>
        <taxon>Viridiplantae</taxon>
        <taxon>Streptophyta</taxon>
        <taxon>Embryophyta</taxon>
        <taxon>Tracheophyta</taxon>
        <taxon>Spermatophyta</taxon>
        <taxon>Magnoliopsida</taxon>
        <taxon>eudicotyledons</taxon>
        <taxon>Gunneridae</taxon>
        <taxon>Pentapetalae</taxon>
        <taxon>rosids</taxon>
        <taxon>fabids</taxon>
        <taxon>Malpighiales</taxon>
        <taxon>Salicaceae</taxon>
        <taxon>Saliceae</taxon>
        <taxon>Populus</taxon>
    </lineage>
</organism>
<protein>
    <recommendedName>
        <fullName evidence="1">NAD(P)H-quinone oxidoreductase subunit 1, chloroplastic</fullName>
        <ecNumber evidence="1">7.1.1.-</ecNumber>
    </recommendedName>
    <alternativeName>
        <fullName evidence="1">NAD(P)H dehydrogenase subunit 1</fullName>
        <shortName evidence="1">NDH subunit 1</shortName>
    </alternativeName>
    <alternativeName>
        <fullName evidence="1">NADH-plastoquinone oxidoreductase subunit 1</fullName>
    </alternativeName>
</protein>
<keyword id="KW-0150">Chloroplast</keyword>
<keyword id="KW-0472">Membrane</keyword>
<keyword id="KW-0520">NAD</keyword>
<keyword id="KW-0521">NADP</keyword>
<keyword id="KW-0934">Plastid</keyword>
<keyword id="KW-0618">Plastoquinone</keyword>
<keyword id="KW-0874">Quinone</keyword>
<keyword id="KW-1185">Reference proteome</keyword>
<keyword id="KW-0793">Thylakoid</keyword>
<keyword id="KW-1278">Translocase</keyword>
<keyword id="KW-0812">Transmembrane</keyword>
<keyword id="KW-1133">Transmembrane helix</keyword>
<feature type="chain" id="PRO_0000298880" description="NAD(P)H-quinone oxidoreductase subunit 1, chloroplastic">
    <location>
        <begin position="1"/>
        <end position="365"/>
    </location>
</feature>
<feature type="transmembrane region" description="Helical" evidence="1">
    <location>
        <begin position="30"/>
        <end position="50"/>
    </location>
</feature>
<feature type="transmembrane region" description="Helical" evidence="1">
    <location>
        <begin position="104"/>
        <end position="124"/>
    </location>
</feature>
<feature type="transmembrane region" description="Helical" evidence="1">
    <location>
        <begin position="129"/>
        <end position="149"/>
    </location>
</feature>
<feature type="transmembrane region" description="Helical" evidence="1">
    <location>
        <begin position="253"/>
        <end position="273"/>
    </location>
</feature>
<feature type="transmembrane region" description="Helical" evidence="1">
    <location>
        <begin position="302"/>
        <end position="322"/>
    </location>
</feature>
<feature type="transmembrane region" description="Helical" evidence="1">
    <location>
        <begin position="338"/>
        <end position="358"/>
    </location>
</feature>